<proteinExistence type="evidence at protein level"/>
<dbReference type="EMBL" id="AJ426477">
    <property type="protein sequence ID" value="CAD20132.1"/>
    <property type="molecule type" value="mRNA"/>
</dbReference>
<dbReference type="EMBL" id="AL049730">
    <property type="protein sequence ID" value="CAB53755.1"/>
    <property type="molecule type" value="Genomic_DNA"/>
</dbReference>
<dbReference type="EMBL" id="AL161534">
    <property type="protein sequence ID" value="CAB78305.1"/>
    <property type="molecule type" value="Genomic_DNA"/>
</dbReference>
<dbReference type="EMBL" id="CP002687">
    <property type="protein sequence ID" value="AEE83158.1"/>
    <property type="molecule type" value="Genomic_DNA"/>
</dbReference>
<dbReference type="PIR" id="E85135">
    <property type="entry name" value="E85135"/>
</dbReference>
<dbReference type="RefSeq" id="NP_192999.1">
    <property type="nucleotide sequence ID" value="NM_117332.3"/>
</dbReference>
<dbReference type="PDB" id="5HH7">
    <property type="method" value="X-ray"/>
    <property type="resolution" value="1.90 A"/>
    <property type="chains" value="A=118-349"/>
</dbReference>
<dbReference type="PDBsum" id="5HH7"/>
<dbReference type="SMR" id="Q9SU24"/>
<dbReference type="DIP" id="DIP-46671N"/>
<dbReference type="FunCoup" id="Q9SU24">
    <property type="interactions" value="257"/>
</dbReference>
<dbReference type="IntAct" id="Q9SU24">
    <property type="interactions" value="9"/>
</dbReference>
<dbReference type="MINT" id="Q9SU24"/>
<dbReference type="STRING" id="3702.Q9SU24"/>
<dbReference type="iPTMnet" id="Q9SU24"/>
<dbReference type="PaxDb" id="3702-AT4G12620.1"/>
<dbReference type="ProteomicsDB" id="248904"/>
<dbReference type="EnsemblPlants" id="AT4G12620.1">
    <property type="protein sequence ID" value="AT4G12620.1"/>
    <property type="gene ID" value="AT4G12620"/>
</dbReference>
<dbReference type="GeneID" id="826875"/>
<dbReference type="Gramene" id="AT4G12620.1">
    <property type="protein sequence ID" value="AT4G12620.1"/>
    <property type="gene ID" value="AT4G12620"/>
</dbReference>
<dbReference type="KEGG" id="ath:AT4G12620"/>
<dbReference type="Araport" id="AT4G12620"/>
<dbReference type="TAIR" id="AT4G12620">
    <property type="gene designation" value="ORC1B"/>
</dbReference>
<dbReference type="eggNOG" id="KOG1514">
    <property type="taxonomic scope" value="Eukaryota"/>
</dbReference>
<dbReference type="HOGENOM" id="CLU_010923_0_0_1"/>
<dbReference type="InParanoid" id="Q9SU24"/>
<dbReference type="OMA" id="RVCFKAG"/>
<dbReference type="PhylomeDB" id="Q9SU24"/>
<dbReference type="PRO" id="PR:Q9SU24"/>
<dbReference type="Proteomes" id="UP000006548">
    <property type="component" value="Chromosome 4"/>
</dbReference>
<dbReference type="ExpressionAtlas" id="Q9SU24">
    <property type="expression patterns" value="baseline and differential"/>
</dbReference>
<dbReference type="GO" id="GO:0005634">
    <property type="term" value="C:nucleus"/>
    <property type="evidence" value="ECO:0007669"/>
    <property type="project" value="UniProtKB-SubCell"/>
</dbReference>
<dbReference type="GO" id="GO:0000808">
    <property type="term" value="C:origin recognition complex"/>
    <property type="evidence" value="ECO:0000250"/>
    <property type="project" value="TAIR"/>
</dbReference>
<dbReference type="GO" id="GO:0005524">
    <property type="term" value="F:ATP binding"/>
    <property type="evidence" value="ECO:0007669"/>
    <property type="project" value="UniProtKB-KW"/>
</dbReference>
<dbReference type="GO" id="GO:0016887">
    <property type="term" value="F:ATP hydrolysis activity"/>
    <property type="evidence" value="ECO:0007669"/>
    <property type="project" value="InterPro"/>
</dbReference>
<dbReference type="GO" id="GO:0003682">
    <property type="term" value="F:chromatin binding"/>
    <property type="evidence" value="ECO:0007669"/>
    <property type="project" value="InterPro"/>
</dbReference>
<dbReference type="GO" id="GO:0010385">
    <property type="term" value="F:double-stranded methylated DNA binding"/>
    <property type="evidence" value="ECO:0000314"/>
    <property type="project" value="TAIR"/>
</dbReference>
<dbReference type="GO" id="GO:0042393">
    <property type="term" value="F:histone binding"/>
    <property type="evidence" value="ECO:0000314"/>
    <property type="project" value="UniProtKB"/>
</dbReference>
<dbReference type="GO" id="GO:0008270">
    <property type="term" value="F:zinc ion binding"/>
    <property type="evidence" value="ECO:0007669"/>
    <property type="project" value="UniProtKB-KW"/>
</dbReference>
<dbReference type="GO" id="GO:0006260">
    <property type="term" value="P:DNA replication"/>
    <property type="evidence" value="ECO:0000250"/>
    <property type="project" value="TAIR"/>
</dbReference>
<dbReference type="GO" id="GO:0009567">
    <property type="term" value="P:double fertilization forming a zygote and endosperm"/>
    <property type="evidence" value="ECO:0000315"/>
    <property type="project" value="TAIR"/>
</dbReference>
<dbReference type="GO" id="GO:0006355">
    <property type="term" value="P:regulation of DNA-templated transcription"/>
    <property type="evidence" value="ECO:0000315"/>
    <property type="project" value="TAIR"/>
</dbReference>
<dbReference type="CDD" id="cd04718">
    <property type="entry name" value="BAH_plant_2"/>
    <property type="match status" value="1"/>
</dbReference>
<dbReference type="DisProt" id="DP02966"/>
<dbReference type="FunFam" id="1.10.8.60:FF:000082">
    <property type="entry name" value="Origin recognition complex subunit 1"/>
    <property type="match status" value="1"/>
</dbReference>
<dbReference type="FunFam" id="2.30.30.490:FF:000020">
    <property type="entry name" value="Origin recognition complex subunit 1"/>
    <property type="match status" value="1"/>
</dbReference>
<dbReference type="FunFam" id="3.30.40.10:FF:000691">
    <property type="entry name" value="Origin recognition complex subunit 1"/>
    <property type="match status" value="1"/>
</dbReference>
<dbReference type="FunFam" id="3.40.50.300:FF:000199">
    <property type="entry name" value="Origin recognition complex subunit 1"/>
    <property type="match status" value="1"/>
</dbReference>
<dbReference type="Gene3D" id="1.10.8.60">
    <property type="match status" value="1"/>
</dbReference>
<dbReference type="Gene3D" id="2.30.30.490">
    <property type="match status" value="1"/>
</dbReference>
<dbReference type="Gene3D" id="3.40.50.300">
    <property type="entry name" value="P-loop containing nucleotide triphosphate hydrolases"/>
    <property type="match status" value="1"/>
</dbReference>
<dbReference type="Gene3D" id="3.30.40.10">
    <property type="entry name" value="Zinc/RING finger domain, C3HC4 (zinc finger)"/>
    <property type="match status" value="1"/>
</dbReference>
<dbReference type="InterPro" id="IPR003593">
    <property type="entry name" value="AAA+_ATPase"/>
</dbReference>
<dbReference type="InterPro" id="IPR041083">
    <property type="entry name" value="AAA_lid_10"/>
</dbReference>
<dbReference type="InterPro" id="IPR003959">
    <property type="entry name" value="ATPase_AAA_core"/>
</dbReference>
<dbReference type="InterPro" id="IPR001025">
    <property type="entry name" value="BAH_dom"/>
</dbReference>
<dbReference type="InterPro" id="IPR043151">
    <property type="entry name" value="BAH_sf"/>
</dbReference>
<dbReference type="InterPro" id="IPR015163">
    <property type="entry name" value="Cdc6_C"/>
</dbReference>
<dbReference type="InterPro" id="IPR050311">
    <property type="entry name" value="ORC1/CDC6"/>
</dbReference>
<dbReference type="InterPro" id="IPR027417">
    <property type="entry name" value="P-loop_NTPase"/>
</dbReference>
<dbReference type="InterPro" id="IPR019786">
    <property type="entry name" value="Zinc_finger_PHD-type_CS"/>
</dbReference>
<dbReference type="InterPro" id="IPR011011">
    <property type="entry name" value="Znf_FYVE_PHD"/>
</dbReference>
<dbReference type="InterPro" id="IPR001965">
    <property type="entry name" value="Znf_PHD"/>
</dbReference>
<dbReference type="InterPro" id="IPR019787">
    <property type="entry name" value="Znf_PHD-finger"/>
</dbReference>
<dbReference type="InterPro" id="IPR013083">
    <property type="entry name" value="Znf_RING/FYVE/PHD"/>
</dbReference>
<dbReference type="PANTHER" id="PTHR10763">
    <property type="entry name" value="CELL DIVISION CONTROL PROTEIN 6-RELATED"/>
    <property type="match status" value="1"/>
</dbReference>
<dbReference type="PANTHER" id="PTHR10763:SF23">
    <property type="entry name" value="ORIGIN RECOGNITION COMPLEX SUBUNIT 1"/>
    <property type="match status" value="1"/>
</dbReference>
<dbReference type="Pfam" id="PF00004">
    <property type="entry name" value="AAA"/>
    <property type="match status" value="1"/>
</dbReference>
<dbReference type="Pfam" id="PF17872">
    <property type="entry name" value="AAA_lid_10"/>
    <property type="match status" value="1"/>
</dbReference>
<dbReference type="Pfam" id="PF01426">
    <property type="entry name" value="BAH"/>
    <property type="match status" value="1"/>
</dbReference>
<dbReference type="Pfam" id="PF09079">
    <property type="entry name" value="Cdc6_C"/>
    <property type="match status" value="1"/>
</dbReference>
<dbReference type="Pfam" id="PF00628">
    <property type="entry name" value="PHD"/>
    <property type="match status" value="1"/>
</dbReference>
<dbReference type="SMART" id="SM00382">
    <property type="entry name" value="AAA"/>
    <property type="match status" value="1"/>
</dbReference>
<dbReference type="SMART" id="SM00439">
    <property type="entry name" value="BAH"/>
    <property type="match status" value="1"/>
</dbReference>
<dbReference type="SMART" id="SM00249">
    <property type="entry name" value="PHD"/>
    <property type="match status" value="1"/>
</dbReference>
<dbReference type="SUPFAM" id="SSF57903">
    <property type="entry name" value="FYVE/PHD zinc finger"/>
    <property type="match status" value="1"/>
</dbReference>
<dbReference type="SUPFAM" id="SSF52540">
    <property type="entry name" value="P-loop containing nucleoside triphosphate hydrolases"/>
    <property type="match status" value="1"/>
</dbReference>
<dbReference type="PROSITE" id="PS51038">
    <property type="entry name" value="BAH"/>
    <property type="match status" value="1"/>
</dbReference>
<dbReference type="PROSITE" id="PS01359">
    <property type="entry name" value="ZF_PHD_1"/>
    <property type="match status" value="1"/>
</dbReference>
<dbReference type="PROSITE" id="PS50016">
    <property type="entry name" value="ZF_PHD_2"/>
    <property type="match status" value="1"/>
</dbReference>
<gene>
    <name evidence="15" type="primary">ORC1B</name>
    <name evidence="14" type="synonym">UNE13</name>
    <name evidence="18" type="ordered locus">At4g12620</name>
    <name evidence="19" type="ORF">T1P17.210</name>
</gene>
<organism>
    <name type="scientific">Arabidopsis thaliana</name>
    <name type="common">Mouse-ear cress</name>
    <dbReference type="NCBI Taxonomy" id="3702"/>
    <lineage>
        <taxon>Eukaryota</taxon>
        <taxon>Viridiplantae</taxon>
        <taxon>Streptophyta</taxon>
        <taxon>Embryophyta</taxon>
        <taxon>Tracheophyta</taxon>
        <taxon>Spermatophyta</taxon>
        <taxon>Magnoliopsida</taxon>
        <taxon>eudicotyledons</taxon>
        <taxon>Gunneridae</taxon>
        <taxon>Pentapetalae</taxon>
        <taxon>rosids</taxon>
        <taxon>malvids</taxon>
        <taxon>Brassicales</taxon>
        <taxon>Brassicaceae</taxon>
        <taxon>Camelineae</taxon>
        <taxon>Arabidopsis</taxon>
    </lineage>
</organism>
<reference key="1">
    <citation type="journal article" date="2005" name="Nucleic Acids Res.">
        <title>The genes encoding Arabidopsis ORC subunits are E2F targets and the two ORC1 genes are differently expressed in proliferating and endoreplicating cells.</title>
        <authorList>
            <person name="Diaz-Trivino S."/>
            <person name="Castellano M.M."/>
            <person name="Sanchez M.P."/>
            <person name="Ramirez-Parra E."/>
            <person name="Desvoyes B."/>
            <person name="Gutierrez C."/>
        </authorList>
    </citation>
    <scope>NUCLEOTIDE SEQUENCE [MRNA]</scope>
    <scope>SUBUNIT</scope>
    <scope>INTERACTION WITH ORC2 AND ORC5</scope>
    <scope>TISSUE SPECIFICITY</scope>
    <scope>DEVELOPMENTAL STAGE</scope>
    <scope>INDUCTION BY E2F AND SUCROSE</scope>
    <scope>GENE FAMILY</scope>
    <scope>NOMENCLATURE</scope>
    <source>
        <strain>cv. Columbia</strain>
    </source>
</reference>
<reference key="2">
    <citation type="journal article" date="1999" name="Nature">
        <title>Sequence and analysis of chromosome 4 of the plant Arabidopsis thaliana.</title>
        <authorList>
            <person name="Mayer K.F.X."/>
            <person name="Schueller C."/>
            <person name="Wambutt R."/>
            <person name="Murphy G."/>
            <person name="Volckaert G."/>
            <person name="Pohl T."/>
            <person name="Duesterhoeft A."/>
            <person name="Stiekema W."/>
            <person name="Entian K.-D."/>
            <person name="Terryn N."/>
            <person name="Harris B."/>
            <person name="Ansorge W."/>
            <person name="Brandt P."/>
            <person name="Grivell L.A."/>
            <person name="Rieger M."/>
            <person name="Weichselgartner M."/>
            <person name="de Simone V."/>
            <person name="Obermaier B."/>
            <person name="Mache R."/>
            <person name="Mueller M."/>
            <person name="Kreis M."/>
            <person name="Delseny M."/>
            <person name="Puigdomenech P."/>
            <person name="Watson M."/>
            <person name="Schmidtheini T."/>
            <person name="Reichert B."/>
            <person name="Portetelle D."/>
            <person name="Perez-Alonso M."/>
            <person name="Boutry M."/>
            <person name="Bancroft I."/>
            <person name="Vos P."/>
            <person name="Hoheisel J."/>
            <person name="Zimmermann W."/>
            <person name="Wedler H."/>
            <person name="Ridley P."/>
            <person name="Langham S.-A."/>
            <person name="McCullagh B."/>
            <person name="Bilham L."/>
            <person name="Robben J."/>
            <person name="van der Schueren J."/>
            <person name="Grymonprez B."/>
            <person name="Chuang Y.-J."/>
            <person name="Vandenbussche F."/>
            <person name="Braeken M."/>
            <person name="Weltjens I."/>
            <person name="Voet M."/>
            <person name="Bastiaens I."/>
            <person name="Aert R."/>
            <person name="Defoor E."/>
            <person name="Weitzenegger T."/>
            <person name="Bothe G."/>
            <person name="Ramsperger U."/>
            <person name="Hilbert H."/>
            <person name="Braun M."/>
            <person name="Holzer E."/>
            <person name="Brandt A."/>
            <person name="Peters S."/>
            <person name="van Staveren M."/>
            <person name="Dirkse W."/>
            <person name="Mooijman P."/>
            <person name="Klein Lankhorst R."/>
            <person name="Rose M."/>
            <person name="Hauf J."/>
            <person name="Koetter P."/>
            <person name="Berneiser S."/>
            <person name="Hempel S."/>
            <person name="Feldpausch M."/>
            <person name="Lamberth S."/>
            <person name="Van den Daele H."/>
            <person name="De Keyser A."/>
            <person name="Buysshaert C."/>
            <person name="Gielen J."/>
            <person name="Villarroel R."/>
            <person name="De Clercq R."/>
            <person name="van Montagu M."/>
            <person name="Rogers J."/>
            <person name="Cronin A."/>
            <person name="Quail M.A."/>
            <person name="Bray-Allen S."/>
            <person name="Clark L."/>
            <person name="Doggett J."/>
            <person name="Hall S."/>
            <person name="Kay M."/>
            <person name="Lennard N."/>
            <person name="McLay K."/>
            <person name="Mayes R."/>
            <person name="Pettett A."/>
            <person name="Rajandream M.A."/>
            <person name="Lyne M."/>
            <person name="Benes V."/>
            <person name="Rechmann S."/>
            <person name="Borkova D."/>
            <person name="Bloecker H."/>
            <person name="Scharfe M."/>
            <person name="Grimm M."/>
            <person name="Loehnert T.-H."/>
            <person name="Dose S."/>
            <person name="de Haan M."/>
            <person name="Maarse A.C."/>
            <person name="Schaefer M."/>
            <person name="Mueller-Auer S."/>
            <person name="Gabel C."/>
            <person name="Fuchs M."/>
            <person name="Fartmann B."/>
            <person name="Granderath K."/>
            <person name="Dauner D."/>
            <person name="Herzl A."/>
            <person name="Neumann S."/>
            <person name="Argiriou A."/>
            <person name="Vitale D."/>
            <person name="Liguori R."/>
            <person name="Piravandi E."/>
            <person name="Massenet O."/>
            <person name="Quigley F."/>
            <person name="Clabauld G."/>
            <person name="Muendlein A."/>
            <person name="Felber R."/>
            <person name="Schnabl S."/>
            <person name="Hiller R."/>
            <person name="Schmidt W."/>
            <person name="Lecharny A."/>
            <person name="Aubourg S."/>
            <person name="Chefdor F."/>
            <person name="Cooke R."/>
            <person name="Berger C."/>
            <person name="Monfort A."/>
            <person name="Casacuberta E."/>
            <person name="Gibbons T."/>
            <person name="Weber N."/>
            <person name="Vandenbol M."/>
            <person name="Bargues M."/>
            <person name="Terol J."/>
            <person name="Torres A."/>
            <person name="Perez-Perez A."/>
            <person name="Purnelle B."/>
            <person name="Bent E."/>
            <person name="Johnson S."/>
            <person name="Tacon D."/>
            <person name="Jesse T."/>
            <person name="Heijnen L."/>
            <person name="Schwarz S."/>
            <person name="Scholler P."/>
            <person name="Heber S."/>
            <person name="Francs P."/>
            <person name="Bielke C."/>
            <person name="Frishman D."/>
            <person name="Haase D."/>
            <person name="Lemcke K."/>
            <person name="Mewes H.-W."/>
            <person name="Stocker S."/>
            <person name="Zaccaria P."/>
            <person name="Bevan M."/>
            <person name="Wilson R.K."/>
            <person name="de la Bastide M."/>
            <person name="Habermann K."/>
            <person name="Parnell L."/>
            <person name="Dedhia N."/>
            <person name="Gnoj L."/>
            <person name="Schutz K."/>
            <person name="Huang E."/>
            <person name="Spiegel L."/>
            <person name="Sekhon M."/>
            <person name="Murray J."/>
            <person name="Sheet P."/>
            <person name="Cordes M."/>
            <person name="Abu-Threideh J."/>
            <person name="Stoneking T."/>
            <person name="Kalicki J."/>
            <person name="Graves T."/>
            <person name="Harmon G."/>
            <person name="Edwards J."/>
            <person name="Latreille P."/>
            <person name="Courtney L."/>
            <person name="Cloud J."/>
            <person name="Abbott A."/>
            <person name="Scott K."/>
            <person name="Johnson D."/>
            <person name="Minx P."/>
            <person name="Bentley D."/>
            <person name="Fulton B."/>
            <person name="Miller N."/>
            <person name="Greco T."/>
            <person name="Kemp K."/>
            <person name="Kramer J."/>
            <person name="Fulton L."/>
            <person name="Mardis E."/>
            <person name="Dante M."/>
            <person name="Pepin K."/>
            <person name="Hillier L.W."/>
            <person name="Nelson J."/>
            <person name="Spieth J."/>
            <person name="Ryan E."/>
            <person name="Andrews S."/>
            <person name="Geisel C."/>
            <person name="Layman D."/>
            <person name="Du H."/>
            <person name="Ali J."/>
            <person name="Berghoff A."/>
            <person name="Jones K."/>
            <person name="Drone K."/>
            <person name="Cotton M."/>
            <person name="Joshu C."/>
            <person name="Antonoiu B."/>
            <person name="Zidanic M."/>
            <person name="Strong C."/>
            <person name="Sun H."/>
            <person name="Lamar B."/>
            <person name="Yordan C."/>
            <person name="Ma P."/>
            <person name="Zhong J."/>
            <person name="Preston R."/>
            <person name="Vil D."/>
            <person name="Shekher M."/>
            <person name="Matero A."/>
            <person name="Shah R."/>
            <person name="Swaby I.K."/>
            <person name="O'Shaughnessy A."/>
            <person name="Rodriguez M."/>
            <person name="Hoffman J."/>
            <person name="Till S."/>
            <person name="Granat S."/>
            <person name="Shohdy N."/>
            <person name="Hasegawa A."/>
            <person name="Hameed A."/>
            <person name="Lodhi M."/>
            <person name="Johnson A."/>
            <person name="Chen E."/>
            <person name="Marra M.A."/>
            <person name="Martienssen R."/>
            <person name="McCombie W.R."/>
        </authorList>
    </citation>
    <scope>NUCLEOTIDE SEQUENCE [LARGE SCALE GENOMIC DNA]</scope>
    <source>
        <strain>cv. Columbia</strain>
    </source>
</reference>
<reference key="3">
    <citation type="journal article" date="2017" name="Plant J.">
        <title>Araport11: a complete reannotation of the Arabidopsis thaliana reference genome.</title>
        <authorList>
            <person name="Cheng C.Y."/>
            <person name="Krishnakumar V."/>
            <person name="Chan A.P."/>
            <person name="Thibaud-Nissen F."/>
            <person name="Schobel S."/>
            <person name="Town C.D."/>
        </authorList>
    </citation>
    <scope>GENOME REANNOTATION</scope>
    <source>
        <strain>cv. Columbia</strain>
    </source>
</reference>
<reference key="4">
    <citation type="journal article" date="2004" name="FEBS Lett.">
        <title>Genome based identification and analysis of the pre-replicative complex of Arabidopsis thaliana.</title>
        <authorList>
            <person name="Masuda H.P."/>
            <person name="Ramos G.B.A."/>
            <person name="de Almeida-Engler J."/>
            <person name="Cabral L.M."/>
            <person name="Coqueiro V.M."/>
            <person name="Macrini C.M.T."/>
            <person name="Ferreira P.C.G."/>
            <person name="Hemerly A.S."/>
        </authorList>
    </citation>
    <scope>SUBUNIT</scope>
    <scope>TISSUE SPECIFICITY</scope>
    <scope>INDUCTION BY SUCROSE</scope>
    <scope>GENE FAMILY</scope>
    <source>
        <strain>cv. Columbia</strain>
    </source>
</reference>
<reference key="5">
    <citation type="journal article" date="2005" name="Development">
        <title>Genetic and molecular identification of genes required for female gametophyte development and function in Arabidopsis.</title>
        <authorList>
            <person name="Pagnussat G.C."/>
            <person name="Yu H.-J."/>
            <person name="Ngo Q.A."/>
            <person name="Rajani S."/>
            <person name="Mayalagu S."/>
            <person name="Johnson C.S."/>
            <person name="Capron A."/>
            <person name="Xie L.-F."/>
            <person name="Ye D."/>
            <person name="Sundaresan V."/>
        </authorList>
    </citation>
    <scope>FUNCTION</scope>
    <scope>DISRUPTION PHENOTYPE</scope>
</reference>
<reference key="6">
    <citation type="journal article" date="2005" name="Plant Physiol.">
        <title>Genome-wide identification of potential plant E2F target genes.</title>
        <authorList>
            <person name="Vandepoele K."/>
            <person name="Vlieghe K."/>
            <person name="Florquin K."/>
            <person name="Hennig L."/>
            <person name="Beemster G.T.S."/>
            <person name="Gruissem W."/>
            <person name="Van de Peer Y."/>
            <person name="Inze D."/>
            <person name="De Veylder L."/>
        </authorList>
    </citation>
    <scope>INDUCTION BY E2F</scope>
</reference>
<reference key="7">
    <citation type="journal article" date="2007" name="Plant Physiol.">
        <title>Genome-wide analysis of the core DNA replication machinery in the higher plants Arabidopsis and rice.</title>
        <authorList>
            <person name="Shultz R.W."/>
            <person name="Tatineni V.M."/>
            <person name="Hanley-Bowdoin L."/>
            <person name="Thompson W.F."/>
        </authorList>
    </citation>
    <scope>REVIEW ON THE CORE DNA REPLICATION MACHINERY</scope>
</reference>
<reference key="8">
    <citation type="journal article" date="2009" name="Proc. Natl. Acad. Sci. U.S.A.">
        <title>Arabidopsis ORC1 is a PHD-containing H3K4me3 effector that regulates transcription.</title>
        <authorList>
            <person name="de la Paz Sanchez M."/>
            <person name="Gutierrez C."/>
        </authorList>
    </citation>
    <scope>FUNCTION</scope>
    <scope>DISRUPTION PHENOTYPE</scope>
    <scope>INTERACTION WITH H3K4ME3</scope>
    <scope>MUTAGENESIS OF 183-CYS--CYS-186 AND PHE-190</scope>
</reference>
<reference key="9">
    <citation type="journal article" date="2016" name="Structure">
        <title>Structural basis for the unique multivalent readout of unmodified H3 tail by Arabidopsis ORC1b BAH-PHD cassette.</title>
        <authorList>
            <person name="Li S."/>
            <person name="Yang Z."/>
            <person name="Du X."/>
            <person name="Liu R."/>
            <person name="Wilkinson A.W."/>
            <person name="Gozani O."/>
            <person name="Jacobsen S.E."/>
            <person name="Patel D.J."/>
            <person name="Du J."/>
        </authorList>
    </citation>
    <scope>X-RAY CRYSTALLOGRAPHY (1.90 ANGSTROMS) OF 118-349 IN COMPLEX WITH ZINC AND HISTONE H3 PEPTIDE</scope>
    <scope>INTERACTION WITH H3</scope>
</reference>
<keyword id="KW-0002">3D-structure</keyword>
<keyword id="KW-0010">Activator</keyword>
<keyword id="KW-0067">ATP-binding</keyword>
<keyword id="KW-0235">DNA replication</keyword>
<keyword id="KW-0238">DNA-binding</keyword>
<keyword id="KW-0460">Magnesium</keyword>
<keyword id="KW-0479">Metal-binding</keyword>
<keyword id="KW-0547">Nucleotide-binding</keyword>
<keyword id="KW-0539">Nucleus</keyword>
<keyword id="KW-1185">Reference proteome</keyword>
<keyword id="KW-0804">Transcription</keyword>
<keyword id="KW-0805">Transcription regulation</keyword>
<keyword id="KW-0862">Zinc</keyword>
<keyword id="KW-0863">Zinc-finger</keyword>
<evidence type="ECO:0000250" key="1">
    <source>
        <dbReference type="UniProtKB" id="P54784"/>
    </source>
</evidence>
<evidence type="ECO:0000250" key="2">
    <source>
        <dbReference type="UniProtKB" id="P54789"/>
    </source>
</evidence>
<evidence type="ECO:0000250" key="3">
    <source>
        <dbReference type="UniProtKB" id="Q13415"/>
    </source>
</evidence>
<evidence type="ECO:0000255" key="4">
    <source>
        <dbReference type="PROSITE-ProRule" id="PRU00146"/>
    </source>
</evidence>
<evidence type="ECO:0000255" key="5">
    <source>
        <dbReference type="PROSITE-ProRule" id="PRU00370"/>
    </source>
</evidence>
<evidence type="ECO:0000255" key="6">
    <source>
        <dbReference type="PROSITE-ProRule" id="PRU00768"/>
    </source>
</evidence>
<evidence type="ECO:0000256" key="7">
    <source>
        <dbReference type="SAM" id="MobiDB-lite"/>
    </source>
</evidence>
<evidence type="ECO:0000269" key="8">
    <source>
    </source>
</evidence>
<evidence type="ECO:0000269" key="9">
    <source>
    </source>
</evidence>
<evidence type="ECO:0000269" key="10">
    <source>
    </source>
</evidence>
<evidence type="ECO:0000269" key="11">
    <source>
    </source>
</evidence>
<evidence type="ECO:0000269" key="12">
    <source>
    </source>
</evidence>
<evidence type="ECO:0000269" key="13">
    <source>
    </source>
</evidence>
<evidence type="ECO:0000303" key="14">
    <source>
    </source>
</evidence>
<evidence type="ECO:0000303" key="15">
    <source>
    </source>
</evidence>
<evidence type="ECO:0000303" key="16">
    <source>
    </source>
</evidence>
<evidence type="ECO:0000305" key="17"/>
<evidence type="ECO:0000312" key="18">
    <source>
        <dbReference type="Araport" id="AT4G12620"/>
    </source>
</evidence>
<evidence type="ECO:0000312" key="19">
    <source>
        <dbReference type="EMBL" id="CAB53755.1"/>
    </source>
</evidence>
<evidence type="ECO:0007744" key="20">
    <source>
        <dbReference type="PDB" id="5HH7"/>
    </source>
</evidence>
<evidence type="ECO:0007829" key="21">
    <source>
        <dbReference type="PDB" id="5HH7"/>
    </source>
</evidence>
<protein>
    <recommendedName>
        <fullName evidence="15">Origin of replication complex subunit 1B</fullName>
        <shortName evidence="15">AtORC1b</shortName>
    </recommendedName>
    <alternativeName>
        <fullName evidence="15">Origin recognition complex 1b protein</fullName>
    </alternativeName>
    <alternativeName>
        <fullName evidence="14">Protein UNFERTILIZED EMBRYO SAC 13</fullName>
    </alternativeName>
</protein>
<name>ORC1B_ARATH</name>
<sequence>MASTPRAKTFKSPTKTPSNIYRKSYLSPSSTSHTPQTPETHTPLRRSARHVSRKIDLGNDPIDAPGNDPIEGMNLIRKRERAPRKPTTDVVPSKSKKTETPKKKKKIDSFTPVSPIRSETIKKTKKKKRVYYNKVEFDETEFEIGDDVYVKRREDSNSDEEEDPEIEDCQICFKSDTNIMIECDDCLGGFHLKCLKPPLKEVPEGDWICQFCEVKKSGQSQTLDLPKPPEGKKLARTMREKLLSGDLWAARIDKLWKEVDDGVYWIRARWYMIPEETVSGRQPHNLKRELYLTNDFADIEMECILRHCSVKCPKEFSKASNDGDDVFLCEYEYDVHWRSFKRLAELADGDSDSDQEWNGRKEEEVDDSDEEMELDDEVLKSKRGGLTSARGGANSRKGRFFGVEKVGMKLIPEHVRCHKQSELEKAKATLLLATRPKSLPCRSKEMEEITSFIKGSISDDQCLGRCMYIHGVPGTGKTISVLSVMKNLKAEVEEGSVSPYCFVEINGLKLASPENIYSVIYEALSGHRVGWKKALQCLNERFAEGKRIGKEDEKPCILLIDELDLLVTRNQSVLYNILDWPTKPNSKLVVLGIANTMDLPEKLLPRISSRMGIQRLCFGPYNHTQLQEIISTRLNGIDAFEKTAIEFASRKVAAISGDARRALEICRRAAEVADHRLNTNKSAKNQLVIMADVEAAIQEMFQAPHIQVMKSVSKLSKIFLTAMVHELYKTGMAETTFDRVATTVSSICLTNGEAFPGWDILLKIGCDLGECRIILCEPGEKHRLQKLQLNFPSDDVAFALKDNKDLPWLANYL</sequence>
<feature type="chain" id="PRO_0000431427" description="Origin of replication complex subunit 1B">
    <location>
        <begin position="1"/>
        <end position="813"/>
    </location>
</feature>
<feature type="domain" description="BAH" evidence="5">
    <location>
        <begin position="226"/>
        <end position="344"/>
    </location>
</feature>
<feature type="zinc finger region" description="PHD-type" evidence="4">
    <location>
        <begin position="166"/>
        <end position="215"/>
    </location>
</feature>
<feature type="region of interest" description="Disordered" evidence="7">
    <location>
        <begin position="1"/>
        <end position="109"/>
    </location>
</feature>
<feature type="region of interest" description="Histone H3 binding" evidence="13 20">
    <location>
        <begin position="163"/>
        <end position="187"/>
    </location>
</feature>
<feature type="region of interest" description="Histone H3 binding" evidence="13 20">
    <location>
        <begin position="203"/>
        <end position="207"/>
    </location>
</feature>
<feature type="region of interest" description="Histone H3 binding" evidence="13 20">
    <location>
        <begin position="319"/>
        <end position="324"/>
    </location>
</feature>
<feature type="region of interest" description="Disordered" evidence="7">
    <location>
        <begin position="349"/>
        <end position="372"/>
    </location>
</feature>
<feature type="region of interest" description="Necessary and sufficient for ORC complex assembly" evidence="3">
    <location>
        <begin position="436"/>
        <end position="803"/>
    </location>
</feature>
<feature type="short sequence motif" description="Nuclear localization signal" evidence="6">
    <location>
        <begin position="83"/>
        <end position="90"/>
    </location>
</feature>
<feature type="compositionally biased region" description="Polar residues" evidence="7">
    <location>
        <begin position="11"/>
        <end position="21"/>
    </location>
</feature>
<feature type="compositionally biased region" description="Low complexity" evidence="7">
    <location>
        <begin position="27"/>
        <end position="41"/>
    </location>
</feature>
<feature type="compositionally biased region" description="Basic residues" evidence="7">
    <location>
        <begin position="43"/>
        <end position="52"/>
    </location>
</feature>
<feature type="binding site" evidence="13 20">
    <location>
        <position position="169"/>
    </location>
    <ligand>
        <name>Zn(2+)</name>
        <dbReference type="ChEBI" id="CHEBI:29105"/>
        <label>2</label>
    </ligand>
</feature>
<feature type="binding site" evidence="13 20">
    <location>
        <position position="172"/>
    </location>
    <ligand>
        <name>Zn(2+)</name>
        <dbReference type="ChEBI" id="CHEBI:29105"/>
        <label>2</label>
    </ligand>
</feature>
<feature type="binding site" evidence="13 20">
    <location>
        <position position="183"/>
    </location>
    <ligand>
        <name>Zn(2+)</name>
        <dbReference type="ChEBI" id="CHEBI:29105"/>
        <label>1</label>
    </ligand>
</feature>
<feature type="binding site" evidence="13 20">
    <location>
        <position position="186"/>
    </location>
    <ligand>
        <name>Zn(2+)</name>
        <dbReference type="ChEBI" id="CHEBI:29105"/>
        <label>1</label>
    </ligand>
</feature>
<feature type="binding site" evidence="13 20">
    <location>
        <position position="191"/>
    </location>
    <ligand>
        <name>Zn(2+)</name>
        <dbReference type="ChEBI" id="CHEBI:29105"/>
        <label>2</label>
    </ligand>
</feature>
<feature type="binding site" evidence="13 20">
    <location>
        <position position="194"/>
    </location>
    <ligand>
        <name>Zn(2+)</name>
        <dbReference type="ChEBI" id="CHEBI:29105"/>
        <label>2</label>
    </ligand>
</feature>
<feature type="binding site" evidence="13 20">
    <location>
        <position position="209"/>
    </location>
    <ligand>
        <name>Zn(2+)</name>
        <dbReference type="ChEBI" id="CHEBI:29105"/>
        <label>1</label>
    </ligand>
</feature>
<feature type="binding site" evidence="13 20">
    <location>
        <position position="212"/>
    </location>
    <ligand>
        <name>Zn(2+)</name>
        <dbReference type="ChEBI" id="CHEBI:29105"/>
        <label>1</label>
    </ligand>
</feature>
<feature type="binding site" evidence="3">
    <location>
        <begin position="471"/>
        <end position="479"/>
    </location>
    <ligand>
        <name>ATP</name>
        <dbReference type="ChEBI" id="CHEBI:30616"/>
    </ligand>
</feature>
<feature type="binding site" evidence="3">
    <location>
        <position position="561"/>
    </location>
    <ligand>
        <name>Mg(2+)</name>
        <dbReference type="ChEBI" id="CHEBI:18420"/>
    </ligand>
</feature>
<feature type="binding site" evidence="3">
    <location>
        <position position="562"/>
    </location>
    <ligand>
        <name>ATP</name>
        <dbReference type="ChEBI" id="CHEBI:30616"/>
    </ligand>
</feature>
<feature type="binding site" evidence="3">
    <location>
        <position position="562"/>
    </location>
    <ligand>
        <name>Mg(2+)</name>
        <dbReference type="ChEBI" id="CHEBI:18420"/>
    </ligand>
</feature>
<feature type="binding site" evidence="3">
    <location>
        <position position="595"/>
    </location>
    <ligand>
        <name>ATP</name>
        <dbReference type="ChEBI" id="CHEBI:30616"/>
    </ligand>
</feature>
<feature type="binding site" evidence="3">
    <location>
        <position position="660"/>
    </location>
    <ligand>
        <name>ATP</name>
        <dbReference type="ChEBI" id="CHEBI:30616"/>
    </ligand>
</feature>
<feature type="mutagenesis site" description="In ORC1b-PHD(C/A); reduced H3K4me3 interaction." evidence="12">
    <original>CDDC</original>
    <variation>ADDA</variation>
    <location>
        <begin position="183"/>
        <end position="186"/>
    </location>
</feature>
<feature type="mutagenesis site" description="In ORC1b-PHD(F/A); reduced H3K4me3 interaction." evidence="12">
    <original>F</original>
    <variation>A</variation>
    <location>
        <position position="190"/>
    </location>
</feature>
<feature type="strand" evidence="21">
    <location>
        <begin position="129"/>
        <end position="137"/>
    </location>
</feature>
<feature type="strand" evidence="21">
    <location>
        <begin position="140"/>
        <end position="143"/>
    </location>
</feature>
<feature type="strand" evidence="21">
    <location>
        <begin position="147"/>
        <end position="150"/>
    </location>
</feature>
<feature type="turn" evidence="21">
    <location>
        <begin position="170"/>
        <end position="172"/>
    </location>
</feature>
<feature type="strand" evidence="21">
    <location>
        <begin position="180"/>
        <end position="182"/>
    </location>
</feature>
<feature type="turn" evidence="21">
    <location>
        <begin position="184"/>
        <end position="186"/>
    </location>
</feature>
<feature type="strand" evidence="21">
    <location>
        <begin position="189"/>
        <end position="191"/>
    </location>
</feature>
<feature type="helix" evidence="21">
    <location>
        <begin position="192"/>
        <end position="194"/>
    </location>
</feature>
<feature type="strand" evidence="21">
    <location>
        <begin position="195"/>
        <end position="197"/>
    </location>
</feature>
<feature type="helix" evidence="21">
    <location>
        <begin position="210"/>
        <end position="214"/>
    </location>
</feature>
<feature type="helix" evidence="21">
    <location>
        <begin position="238"/>
        <end position="243"/>
    </location>
</feature>
<feature type="strand" evidence="21">
    <location>
        <begin position="246"/>
        <end position="258"/>
    </location>
</feature>
<feature type="turn" evidence="21">
    <location>
        <begin position="259"/>
        <end position="261"/>
    </location>
</feature>
<feature type="strand" evidence="21">
    <location>
        <begin position="264"/>
        <end position="272"/>
    </location>
</feature>
<feature type="helix" evidence="21">
    <location>
        <begin position="274"/>
        <end position="276"/>
    </location>
</feature>
<feature type="strand" evidence="21">
    <location>
        <begin position="291"/>
        <end position="300"/>
    </location>
</feature>
<feature type="helix" evidence="21">
    <location>
        <begin position="301"/>
        <end position="303"/>
    </location>
</feature>
<feature type="strand" evidence="21">
    <location>
        <begin position="304"/>
        <end position="311"/>
    </location>
</feature>
<feature type="helix" evidence="21">
    <location>
        <begin position="313"/>
        <end position="316"/>
    </location>
</feature>
<feature type="helix" evidence="21">
    <location>
        <begin position="317"/>
        <end position="319"/>
    </location>
</feature>
<feature type="strand" evidence="21">
    <location>
        <begin position="326"/>
        <end position="328"/>
    </location>
</feature>
<feature type="strand" evidence="21">
    <location>
        <begin position="331"/>
        <end position="334"/>
    </location>
</feature>
<feature type="turn" evidence="21">
    <location>
        <begin position="335"/>
        <end position="338"/>
    </location>
</feature>
<feature type="strand" evidence="21">
    <location>
        <begin position="339"/>
        <end position="342"/>
    </location>
</feature>
<comment type="function">
    <text evidence="1 9 12">Essential protein required for ovules fertilization (PubMed:15634699, PubMed:19171893). Component of the origin recognition complex (ORC) that binds origins of replication. It has a role in both chromosomal replication and mating type transcriptional silencing. Binds to the ARS consensus sequence (ACS) of origins of replication (By similarity). H3K4me3 effector that positively regulates the transcription of a subset of genes (PubMed:19171893).</text>
</comment>
<comment type="subunit">
    <text evidence="8 11 12 13">Component of the origin recognition complex (ORC) composed of at least ORC1 (ORC1A or ORC1B), ORC2, ORC3, ORC4, ORC5 and ORC6. ORC is regulated in a cell-cycle and development dependent manner. It is sequentially assembled at the exit from anaphase of mitosis and disassembled as cells enter S phase. Interacts directly with ORC2 and ORC5 (PubMed:15358564, PubMed:16179646). Binds mostly unmodified histone H3, and, with lower efficiency, H3K4me1 H3K4me2 and H3K4me3 (PubMed:19171893, PubMed:26876097).</text>
</comment>
<comment type="interaction">
    <interactant intactId="EBI-2114228">
        <id>Q9SU24</id>
    </interactant>
    <interactant intactId="EBI-541722">
        <id>B7U179</id>
        <label>ABAP1</label>
    </interactant>
    <organismsDiffer>false</organismsDiffer>
    <experiments>2</experiments>
</comment>
<comment type="subcellular location">
    <subcellularLocation>
        <location evidence="2 6">Nucleus</location>
    </subcellularLocation>
</comment>
<comment type="tissue specificity">
    <text evidence="8 11">Follow a cell-cycle regulation with a peak at the G1/S-phase (PubMed:16179646). Mostly expressed in flower buds, and, to a lower exent, in roots, leaves and stems (PubMed:15358564, PubMed:16179646).</text>
</comment>
<comment type="developmental stage">
    <text evidence="11">Restricted to proliferating cells. First active during embryogenesis, but inactive in mature embryos. Expressed in shoot and root apical meristems. Later observed in lateral root primordia and meristems. Detected in young flower buds, developing anthers and mature pollen.</text>
</comment>
<comment type="induction">
    <text evidence="8 10 11">Regulated by E2F (PubMed:16126853, PubMed:16179646). Accumulates rapidly after cell cycle reactivation by sucrose addition following cell cycle arrest mediated by sucrose deprivation (PubMed:15358564, PubMed:16179646).</text>
</comment>
<comment type="disruption phenotype">
    <text evidence="9 16">Lethal (PubMed:19171893). Unfertilized ovules but normal pollen tube attraction (PubMed:15634699).</text>
</comment>
<comment type="similarity">
    <text evidence="17">Belongs to the ORC1 family.</text>
</comment>
<accession>Q9SU24</accession>